<keyword id="KW-0469">Meiosis</keyword>
<keyword id="KW-1185">Reference proteome</keyword>
<keyword id="KW-0677">Repeat</keyword>
<keyword id="KW-0804">Transcription</keyword>
<keyword id="KW-0805">Transcription regulation</keyword>
<keyword id="KW-0853">WD repeat</keyword>
<name>WTM2_YEAST</name>
<reference key="1">
    <citation type="journal article" date="1996" name="Yeast">
        <title>Sequence and analysis of a 33 kb fragment from the right arm of chromosome XV of the yeast Saccharomyces cerevisiae.</title>
        <authorList>
            <person name="Galisson F."/>
            <person name="Dujon B."/>
        </authorList>
    </citation>
    <scope>NUCLEOTIDE SEQUENCE [GENOMIC DNA]</scope>
    <source>
        <strain>ATCC 96604 / S288c / FY1679</strain>
    </source>
</reference>
<reference key="2">
    <citation type="journal article" date="1997" name="Nature">
        <title>The nucleotide sequence of Saccharomyces cerevisiae chromosome XV.</title>
        <authorList>
            <person name="Dujon B."/>
            <person name="Albermann K."/>
            <person name="Aldea M."/>
            <person name="Alexandraki D."/>
            <person name="Ansorge W."/>
            <person name="Arino J."/>
            <person name="Benes V."/>
            <person name="Bohn C."/>
            <person name="Bolotin-Fukuhara M."/>
            <person name="Bordonne R."/>
            <person name="Boyer J."/>
            <person name="Camasses A."/>
            <person name="Casamayor A."/>
            <person name="Casas C."/>
            <person name="Cheret G."/>
            <person name="Cziepluch C."/>
            <person name="Daignan-Fornier B."/>
            <person name="Dang V.-D."/>
            <person name="de Haan M."/>
            <person name="Delius H."/>
            <person name="Durand P."/>
            <person name="Fairhead C."/>
            <person name="Feldmann H."/>
            <person name="Gaillon L."/>
            <person name="Galisson F."/>
            <person name="Gamo F.-J."/>
            <person name="Gancedo C."/>
            <person name="Goffeau A."/>
            <person name="Goulding S.E."/>
            <person name="Grivell L.A."/>
            <person name="Habbig B."/>
            <person name="Hand N.J."/>
            <person name="Hani J."/>
            <person name="Hattenhorst U."/>
            <person name="Hebling U."/>
            <person name="Hernando Y."/>
            <person name="Herrero E."/>
            <person name="Heumann K."/>
            <person name="Hiesel R."/>
            <person name="Hilger F."/>
            <person name="Hofmann B."/>
            <person name="Hollenberg C.P."/>
            <person name="Hughes B."/>
            <person name="Jauniaux J.-C."/>
            <person name="Kalogeropoulos A."/>
            <person name="Katsoulou C."/>
            <person name="Kordes E."/>
            <person name="Lafuente M.J."/>
            <person name="Landt O."/>
            <person name="Louis E.J."/>
            <person name="Maarse A.C."/>
            <person name="Madania A."/>
            <person name="Mannhaupt G."/>
            <person name="Marck C."/>
            <person name="Martin R.P."/>
            <person name="Mewes H.-W."/>
            <person name="Michaux G."/>
            <person name="Paces V."/>
            <person name="Parle-McDermott A.G."/>
            <person name="Pearson B.M."/>
            <person name="Perrin A."/>
            <person name="Pettersson B."/>
            <person name="Poch O."/>
            <person name="Pohl T.M."/>
            <person name="Poirey R."/>
            <person name="Portetelle D."/>
            <person name="Pujol A."/>
            <person name="Purnelle B."/>
            <person name="Ramezani Rad M."/>
            <person name="Rechmann S."/>
            <person name="Schwager C."/>
            <person name="Schweizer M."/>
            <person name="Sor F."/>
            <person name="Sterky F."/>
            <person name="Tarassov I.A."/>
            <person name="Teodoru C."/>
            <person name="Tettelin H."/>
            <person name="Thierry A."/>
            <person name="Tobiasch E."/>
            <person name="Tzermia M."/>
            <person name="Uhlen M."/>
            <person name="Unseld M."/>
            <person name="Valens M."/>
            <person name="Vandenbol M."/>
            <person name="Vetter I."/>
            <person name="Vlcek C."/>
            <person name="Voet M."/>
            <person name="Volckaert G."/>
            <person name="Voss H."/>
            <person name="Wambutt R."/>
            <person name="Wedler H."/>
            <person name="Wiemann S."/>
            <person name="Winsor B."/>
            <person name="Wolfe K.H."/>
            <person name="Zollner A."/>
            <person name="Zumstein E."/>
            <person name="Kleine K."/>
        </authorList>
    </citation>
    <scope>NUCLEOTIDE SEQUENCE [LARGE SCALE GENOMIC DNA]</scope>
    <source>
        <strain>ATCC 204508 / S288c</strain>
    </source>
</reference>
<reference key="3">
    <citation type="journal article" date="2014" name="G3 (Bethesda)">
        <title>The reference genome sequence of Saccharomyces cerevisiae: Then and now.</title>
        <authorList>
            <person name="Engel S.R."/>
            <person name="Dietrich F.S."/>
            <person name="Fisk D.G."/>
            <person name="Binkley G."/>
            <person name="Balakrishnan R."/>
            <person name="Costanzo M.C."/>
            <person name="Dwight S.S."/>
            <person name="Hitz B.C."/>
            <person name="Karra K."/>
            <person name="Nash R.S."/>
            <person name="Weng S."/>
            <person name="Wong E.D."/>
            <person name="Lloyd P."/>
            <person name="Skrzypek M.S."/>
            <person name="Miyasato S.R."/>
            <person name="Simison M."/>
            <person name="Cherry J.M."/>
        </authorList>
    </citation>
    <scope>GENOME REANNOTATION</scope>
    <source>
        <strain>ATCC 204508 / S288c</strain>
    </source>
</reference>
<reference key="4">
    <citation type="journal article" date="2003" name="Nature">
        <title>Global analysis of protein expression in yeast.</title>
        <authorList>
            <person name="Ghaemmaghami S."/>
            <person name="Huh W.-K."/>
            <person name="Bower K."/>
            <person name="Howson R.W."/>
            <person name="Belle A."/>
            <person name="Dephoure N."/>
            <person name="O'Shea E.K."/>
            <person name="Weissman J.S."/>
        </authorList>
    </citation>
    <scope>LEVEL OF PROTEIN EXPRESSION [LARGE SCALE ANALYSIS]</scope>
</reference>
<reference key="5">
    <citation type="journal article" date="2009" name="Science">
        <title>Global analysis of Cdk1 substrate phosphorylation sites provides insights into evolution.</title>
        <authorList>
            <person name="Holt L.J."/>
            <person name="Tuch B.B."/>
            <person name="Villen J."/>
            <person name="Johnson A.D."/>
            <person name="Gygi S.P."/>
            <person name="Morgan D.O."/>
        </authorList>
    </citation>
    <scope>IDENTIFICATION BY MASS SPECTROMETRY [LARGE SCALE ANALYSIS]</scope>
</reference>
<reference key="6">
    <citation type="journal article" date="2012" name="Proc. Natl. Acad. Sci. U.S.A.">
        <title>N-terminal acetylome analyses and functional insights of the N-terminal acetyltransferase NatB.</title>
        <authorList>
            <person name="Van Damme P."/>
            <person name="Lasa M."/>
            <person name="Polevoda B."/>
            <person name="Gazquez C."/>
            <person name="Elosegui-Artola A."/>
            <person name="Kim D.S."/>
            <person name="De Juan-Pardo E."/>
            <person name="Demeyer K."/>
            <person name="Hole K."/>
            <person name="Larrea E."/>
            <person name="Timmerman E."/>
            <person name="Prieto J."/>
            <person name="Arnesen T."/>
            <person name="Sherman F."/>
            <person name="Gevaert K."/>
            <person name="Aldabe R."/>
        </authorList>
    </citation>
    <scope>IDENTIFICATION BY MASS SPECTROMETRY [LARGE SCALE ANALYSIS]</scope>
</reference>
<dbReference type="EMBL" id="X92441">
    <property type="protein sequence ID" value="CAA63192.1"/>
    <property type="molecule type" value="Genomic_DNA"/>
</dbReference>
<dbReference type="EMBL" id="Z75137">
    <property type="protein sequence ID" value="CAA99449.1"/>
    <property type="molecule type" value="Genomic_DNA"/>
</dbReference>
<dbReference type="EMBL" id="BK006948">
    <property type="protein sequence ID" value="DAA10999.1"/>
    <property type="molecule type" value="Genomic_DNA"/>
</dbReference>
<dbReference type="PIR" id="S60956">
    <property type="entry name" value="S60956"/>
</dbReference>
<dbReference type="RefSeq" id="NP_014872.1">
    <property type="nucleotide sequence ID" value="NM_001183648.1"/>
</dbReference>
<dbReference type="SMR" id="Q12206"/>
<dbReference type="BioGRID" id="34622">
    <property type="interactions" value="70"/>
</dbReference>
<dbReference type="DIP" id="DIP-1534N"/>
<dbReference type="FunCoup" id="Q12206">
    <property type="interactions" value="158"/>
</dbReference>
<dbReference type="IntAct" id="Q12206">
    <property type="interactions" value="26"/>
</dbReference>
<dbReference type="MINT" id="Q12206"/>
<dbReference type="STRING" id="4932.YOR229W"/>
<dbReference type="iPTMnet" id="Q12206"/>
<dbReference type="PaxDb" id="4932-YOR229W"/>
<dbReference type="PeptideAtlas" id="Q12206"/>
<dbReference type="EnsemblFungi" id="YOR229W_mRNA">
    <property type="protein sequence ID" value="YOR229W"/>
    <property type="gene ID" value="YOR229W"/>
</dbReference>
<dbReference type="GeneID" id="854404"/>
<dbReference type="KEGG" id="sce:YOR229W"/>
<dbReference type="AGR" id="SGD:S000005755"/>
<dbReference type="SGD" id="S000005755">
    <property type="gene designation" value="WTM2"/>
</dbReference>
<dbReference type="VEuPathDB" id="FungiDB:YOR229W"/>
<dbReference type="eggNOG" id="ENOG502QSEV">
    <property type="taxonomic scope" value="Eukaryota"/>
</dbReference>
<dbReference type="GeneTree" id="ENSGT00940000176348"/>
<dbReference type="HOGENOM" id="CLU_036523_0_0_1"/>
<dbReference type="InParanoid" id="Q12206"/>
<dbReference type="OMA" id="LTHRQNG"/>
<dbReference type="OrthoDB" id="427795at2759"/>
<dbReference type="BioCyc" id="YEAST:G3O-33727-MONOMER"/>
<dbReference type="Reactome" id="R-SCE-3214815">
    <property type="pathway name" value="HDACs deacetylate histones"/>
</dbReference>
<dbReference type="BioGRID-ORCS" id="854404">
    <property type="hits" value="0 hits in 10 CRISPR screens"/>
</dbReference>
<dbReference type="PRO" id="PR:Q12206"/>
<dbReference type="Proteomes" id="UP000002311">
    <property type="component" value="Chromosome XV"/>
</dbReference>
<dbReference type="RNAct" id="Q12206">
    <property type="molecule type" value="protein"/>
</dbReference>
<dbReference type="GO" id="GO:0005737">
    <property type="term" value="C:cytoplasm"/>
    <property type="evidence" value="ECO:0000318"/>
    <property type="project" value="GO_Central"/>
</dbReference>
<dbReference type="GO" id="GO:0005829">
    <property type="term" value="C:cytosol"/>
    <property type="evidence" value="ECO:0000314"/>
    <property type="project" value="SGD"/>
</dbReference>
<dbReference type="GO" id="GO:0005634">
    <property type="term" value="C:nucleus"/>
    <property type="evidence" value="ECO:0000314"/>
    <property type="project" value="SGD"/>
</dbReference>
<dbReference type="GO" id="GO:0033698">
    <property type="term" value="C:Rpd3L complex"/>
    <property type="evidence" value="ECO:0000318"/>
    <property type="project" value="GO_Central"/>
</dbReference>
<dbReference type="GO" id="GO:0070210">
    <property type="term" value="C:Rpd3L-Expanded complex"/>
    <property type="evidence" value="ECO:0000318"/>
    <property type="project" value="GO_Central"/>
</dbReference>
<dbReference type="GO" id="GO:0000981">
    <property type="term" value="F:DNA-binding transcription factor activity, RNA polymerase II-specific"/>
    <property type="evidence" value="ECO:0000314"/>
    <property type="project" value="SGD"/>
</dbReference>
<dbReference type="GO" id="GO:0042393">
    <property type="term" value="F:histone binding"/>
    <property type="evidence" value="ECO:0000318"/>
    <property type="project" value="GO_Central"/>
</dbReference>
<dbReference type="GO" id="GO:0003714">
    <property type="term" value="F:transcription corepressor activity"/>
    <property type="evidence" value="ECO:0000314"/>
    <property type="project" value="SGD"/>
</dbReference>
<dbReference type="GO" id="GO:0006338">
    <property type="term" value="P:chromatin remodeling"/>
    <property type="evidence" value="ECO:0000318"/>
    <property type="project" value="GO_Central"/>
</dbReference>
<dbReference type="GO" id="GO:0006974">
    <property type="term" value="P:DNA damage response"/>
    <property type="evidence" value="ECO:0000315"/>
    <property type="project" value="SGD"/>
</dbReference>
<dbReference type="GO" id="GO:0051321">
    <property type="term" value="P:meiotic cell cycle"/>
    <property type="evidence" value="ECO:0000316"/>
    <property type="project" value="SGD"/>
</dbReference>
<dbReference type="GO" id="GO:0061186">
    <property type="term" value="P:negative regulation of silent mating-type cassette heterochromatin formation"/>
    <property type="evidence" value="ECO:0000316"/>
    <property type="project" value="SGD"/>
</dbReference>
<dbReference type="GO" id="GO:0000122">
    <property type="term" value="P:negative regulation of transcription by RNA polymerase II"/>
    <property type="evidence" value="ECO:0000316"/>
    <property type="project" value="SGD"/>
</dbReference>
<dbReference type="GO" id="GO:0045944">
    <property type="term" value="P:positive regulation of transcription by RNA polymerase II"/>
    <property type="evidence" value="ECO:0000314"/>
    <property type="project" value="SGD"/>
</dbReference>
<dbReference type="GO" id="GO:0031503">
    <property type="term" value="P:protein-containing complex localization"/>
    <property type="evidence" value="ECO:0000315"/>
    <property type="project" value="SGD"/>
</dbReference>
<dbReference type="GO" id="GO:0006355">
    <property type="term" value="P:regulation of DNA-templated transcription"/>
    <property type="evidence" value="ECO:0000318"/>
    <property type="project" value="GO_Central"/>
</dbReference>
<dbReference type="FunFam" id="2.130.10.10:FF:000523">
    <property type="entry name" value="Transcriptional modulator"/>
    <property type="match status" value="1"/>
</dbReference>
<dbReference type="Gene3D" id="2.130.10.10">
    <property type="entry name" value="YVTN repeat-like/Quinoprotein amine dehydrogenase"/>
    <property type="match status" value="1"/>
</dbReference>
<dbReference type="InterPro" id="IPR015943">
    <property type="entry name" value="WD40/YVTN_repeat-like_dom_sf"/>
</dbReference>
<dbReference type="InterPro" id="IPR036322">
    <property type="entry name" value="WD40_repeat_dom_sf"/>
</dbReference>
<dbReference type="InterPro" id="IPR001680">
    <property type="entry name" value="WD40_rpt"/>
</dbReference>
<dbReference type="InterPro" id="IPR050459">
    <property type="entry name" value="WD_repeat_RBAP46/RBAP48/MSI1"/>
</dbReference>
<dbReference type="PANTHER" id="PTHR22850">
    <property type="entry name" value="WD40 REPEAT FAMILY"/>
    <property type="match status" value="1"/>
</dbReference>
<dbReference type="Pfam" id="PF00400">
    <property type="entry name" value="WD40"/>
    <property type="match status" value="1"/>
</dbReference>
<dbReference type="SMART" id="SM00320">
    <property type="entry name" value="WD40"/>
    <property type="match status" value="3"/>
</dbReference>
<dbReference type="SUPFAM" id="SSF50978">
    <property type="entry name" value="WD40 repeat-like"/>
    <property type="match status" value="1"/>
</dbReference>
<dbReference type="PROSITE" id="PS50294">
    <property type="entry name" value="WD_REPEATS_REGION"/>
    <property type="match status" value="1"/>
</dbReference>
<accession>Q12206</accession>
<accession>D6W2T3</accession>
<sequence>MAKSKSSQGASGARRKPAPSLYQHISSFKPQFSTRVDDVLHFSKTLTWRSEIIPDKSKGTLTTSLLYSQGSDIYEIDTTLPLKTFYDDDDDDDNDDDDEEGNGKTKSAATPNPEYGDAFQDVEGKPLRPKWIYQGETVAKMQYLESSDDSTAIAMSKNGSLAWFRDEIKVPVHIVQEMMGPATRYSSIHSLTRPGSLAVSDFDVSTNMDTVVKSQSNGYEEDSILKIIDNSDRPGDILRTVHVPGTNVAHSVRFFNNHLFASCSDDNILRFWDTRTADKPLWTLSEPKNGRLTSFDSSQVTENLFVTGFSTGVIKLWDARAVQLATTDLTHRQNGEEPIQNEIAKLFHSGGDSVVDILFSQTSATEFVTVGGTGNVYHWDMEYSFSRNDDDNEDEVRVAAPEELQGQCLKFFHTGGTRRSSNQFGKRNTVALHPVINDFVGTVDSDSLVTAYKPFLASDFIGRGYDD</sequence>
<comment type="function">
    <text>Transcriptional modulator with roles in meiotic regulation and silencing.</text>
</comment>
<comment type="interaction">
    <interactant intactId="EBI-20571">
        <id>Q12206</id>
    </interactant>
    <interactant intactId="EBI-15251">
        <id>P49723</id>
        <label>RNR4</label>
    </interactant>
    <organismsDiffer>false</organismsDiffer>
    <experiments>3</experiments>
</comment>
<comment type="interaction">
    <interactant intactId="EBI-20571">
        <id>Q12206</id>
    </interactant>
    <interactant intactId="EBI-20563">
        <id>Q12363</id>
        <label>WTM1</label>
    </interactant>
    <organismsDiffer>false</organismsDiffer>
    <experiments>4</experiments>
</comment>
<comment type="interaction">
    <interactant intactId="EBI-20571">
        <id>Q12206</id>
    </interactant>
    <interactant intactId="EBI-31025">
        <id>Q12040</id>
        <label>YOR283W</label>
    </interactant>
    <organismsDiffer>false</organismsDiffer>
    <experiments>3</experiments>
</comment>
<comment type="miscellaneous">
    <text evidence="2">Present with 3750 molecules/cell in log phase SD medium.</text>
</comment>
<gene>
    <name type="primary">WTM2</name>
    <name type="ordered locus">YOR229W</name>
    <name type="ORF">YOR50-19</name>
</gene>
<protein>
    <recommendedName>
        <fullName>Transcriptional modulator WTM2</fullName>
    </recommendedName>
</protein>
<evidence type="ECO:0000256" key="1">
    <source>
        <dbReference type="SAM" id="MobiDB-lite"/>
    </source>
</evidence>
<evidence type="ECO:0000269" key="2">
    <source>
    </source>
</evidence>
<organism>
    <name type="scientific">Saccharomyces cerevisiae (strain ATCC 204508 / S288c)</name>
    <name type="common">Baker's yeast</name>
    <dbReference type="NCBI Taxonomy" id="559292"/>
    <lineage>
        <taxon>Eukaryota</taxon>
        <taxon>Fungi</taxon>
        <taxon>Dikarya</taxon>
        <taxon>Ascomycota</taxon>
        <taxon>Saccharomycotina</taxon>
        <taxon>Saccharomycetes</taxon>
        <taxon>Saccharomycetales</taxon>
        <taxon>Saccharomycetaceae</taxon>
        <taxon>Saccharomyces</taxon>
    </lineage>
</organism>
<proteinExistence type="evidence at protein level"/>
<feature type="chain" id="PRO_0000051464" description="Transcriptional modulator WTM2">
    <location>
        <begin position="1"/>
        <end position="467"/>
    </location>
</feature>
<feature type="repeat" description="WD 1">
    <location>
        <begin position="244"/>
        <end position="282"/>
    </location>
</feature>
<feature type="repeat" description="WD 2">
    <location>
        <begin position="287"/>
        <end position="327"/>
    </location>
</feature>
<feature type="repeat" description="WD 3">
    <location>
        <begin position="349"/>
        <end position="389"/>
    </location>
</feature>
<feature type="region of interest" description="Disordered" evidence="1">
    <location>
        <begin position="1"/>
        <end position="22"/>
    </location>
</feature>
<feature type="region of interest" description="Disordered" evidence="1">
    <location>
        <begin position="84"/>
        <end position="121"/>
    </location>
</feature>
<feature type="compositionally biased region" description="Low complexity" evidence="1">
    <location>
        <begin position="1"/>
        <end position="12"/>
    </location>
</feature>
<feature type="compositionally biased region" description="Acidic residues" evidence="1">
    <location>
        <begin position="87"/>
        <end position="100"/>
    </location>
</feature>